<dbReference type="EMBL" id="M25281">
    <property type="protein sequence ID" value="AAA65843.1"/>
    <property type="molecule type" value="Genomic_DNA"/>
</dbReference>
<dbReference type="EMBL" id="M36919">
    <property type="protein sequence ID" value="AAA75395.1"/>
    <property type="molecule type" value="Genomic_DNA"/>
</dbReference>
<dbReference type="EMBL" id="M36920">
    <property type="protein sequence ID" value="AAA29441.1"/>
    <property type="molecule type" value="Genomic_DNA"/>
</dbReference>
<dbReference type="SMR" id="P69073"/>
<dbReference type="GO" id="GO:0000786">
    <property type="term" value="C:nucleosome"/>
    <property type="evidence" value="ECO:0007669"/>
    <property type="project" value="UniProtKB-KW"/>
</dbReference>
<dbReference type="GO" id="GO:0005634">
    <property type="term" value="C:nucleus"/>
    <property type="evidence" value="ECO:0007669"/>
    <property type="project" value="UniProtKB-SubCell"/>
</dbReference>
<dbReference type="GO" id="GO:0003677">
    <property type="term" value="F:DNA binding"/>
    <property type="evidence" value="ECO:0007669"/>
    <property type="project" value="UniProtKB-KW"/>
</dbReference>
<dbReference type="GO" id="GO:0046982">
    <property type="term" value="F:protein heterodimerization activity"/>
    <property type="evidence" value="ECO:0007669"/>
    <property type="project" value="InterPro"/>
</dbReference>
<dbReference type="GO" id="GO:0030527">
    <property type="term" value="F:structural constituent of chromatin"/>
    <property type="evidence" value="ECO:0007669"/>
    <property type="project" value="InterPro"/>
</dbReference>
<dbReference type="CDD" id="cd22911">
    <property type="entry name" value="HFD_H3"/>
    <property type="match status" value="1"/>
</dbReference>
<dbReference type="FunFam" id="1.10.20.10:FF:000078">
    <property type="entry name" value="Histone H3"/>
    <property type="match status" value="1"/>
</dbReference>
<dbReference type="FunFam" id="1.10.20.10:FF:000044">
    <property type="entry name" value="Histone H3.3"/>
    <property type="match status" value="1"/>
</dbReference>
<dbReference type="Gene3D" id="1.10.20.10">
    <property type="entry name" value="Histone, subunit A"/>
    <property type="match status" value="1"/>
</dbReference>
<dbReference type="InterPro" id="IPR009072">
    <property type="entry name" value="Histone-fold"/>
</dbReference>
<dbReference type="InterPro" id="IPR007125">
    <property type="entry name" value="Histone_H2A/H2B/H3"/>
</dbReference>
<dbReference type="InterPro" id="IPR000164">
    <property type="entry name" value="Histone_H3/CENP-A"/>
</dbReference>
<dbReference type="PANTHER" id="PTHR11426">
    <property type="entry name" value="HISTONE H3"/>
    <property type="match status" value="1"/>
</dbReference>
<dbReference type="Pfam" id="PF00125">
    <property type="entry name" value="Histone"/>
    <property type="match status" value="1"/>
</dbReference>
<dbReference type="PRINTS" id="PR00622">
    <property type="entry name" value="HISTONEH3"/>
</dbReference>
<dbReference type="SMART" id="SM00428">
    <property type="entry name" value="H3"/>
    <property type="match status" value="1"/>
</dbReference>
<dbReference type="SUPFAM" id="SSF47113">
    <property type="entry name" value="Histone-fold"/>
    <property type="match status" value="1"/>
</dbReference>
<dbReference type="PROSITE" id="PS00322">
    <property type="entry name" value="HISTONE_H3_1"/>
    <property type="match status" value="1"/>
</dbReference>
<dbReference type="PROSITE" id="PS00959">
    <property type="entry name" value="HISTONE_H3_2"/>
    <property type="match status" value="1"/>
</dbReference>
<name>H3_PARLI</name>
<reference key="1">
    <citation type="submission" date="1989-02" db="EMBL/GenBank/DDBJ databases">
        <authorList>
            <person name="Spinelli G."/>
        </authorList>
    </citation>
    <scope>NUCLEOTIDE SEQUENCE [GENOMIC DNA]</scope>
</reference>
<reference key="2">
    <citation type="journal article" date="1982" name="EMBO J.">
        <title>An unusual evolutionary behaviour of a sea urchin histone gene cluster.</title>
        <authorList>
            <person name="Busslinger M."/>
            <person name="Rusconi S."/>
            <person name="Birnstiel M.L."/>
        </authorList>
    </citation>
    <scope>NUCLEOTIDE SEQUENCE [GENOMIC DNA]</scope>
</reference>
<feature type="initiator methionine" description="Removed" evidence="1">
    <location>
        <position position="1"/>
    </location>
</feature>
<feature type="chain" id="PRO_0000221313" description="Histone H3, embryonic">
    <location>
        <begin position="2"/>
        <end position="136"/>
    </location>
</feature>
<feature type="region of interest" description="Disordered" evidence="2">
    <location>
        <begin position="1"/>
        <end position="43"/>
    </location>
</feature>
<feature type="modified residue" description="N6-methylated lysine" evidence="1">
    <location>
        <position position="5"/>
    </location>
</feature>
<feature type="modified residue" description="N6-acetyllysine; alternate" evidence="1">
    <location>
        <position position="10"/>
    </location>
</feature>
<feature type="modified residue" description="N6-methylated lysine; alternate" evidence="1">
    <location>
        <position position="10"/>
    </location>
</feature>
<feature type="modified residue" description="Phosphoserine" evidence="1">
    <location>
        <position position="11"/>
    </location>
</feature>
<feature type="modified residue" description="N6-acetyllysine" evidence="1">
    <location>
        <position position="15"/>
    </location>
</feature>
<feature type="modified residue" description="N6-acetyllysine" evidence="1">
    <location>
        <position position="24"/>
    </location>
</feature>
<feature type="modified residue" description="N6-methylated lysine" evidence="1">
    <location>
        <position position="28"/>
    </location>
</feature>
<feature type="modified residue" description="N6-methylated lysine" evidence="1">
    <location>
        <position position="37"/>
    </location>
</feature>
<feature type="modified residue" description="N6-methylated lysine" evidence="1">
    <location>
        <position position="80"/>
    </location>
</feature>
<accession>P69073</accession>
<accession>P02298</accession>
<accession>P05320</accession>
<accession>P05321</accession>
<accession>P05322</accession>
<protein>
    <recommendedName>
        <fullName>Histone H3, embryonic</fullName>
    </recommendedName>
</protein>
<organism>
    <name type="scientific">Paracentrotus lividus</name>
    <name type="common">Common sea urchin</name>
    <dbReference type="NCBI Taxonomy" id="7656"/>
    <lineage>
        <taxon>Eukaryota</taxon>
        <taxon>Metazoa</taxon>
        <taxon>Echinodermata</taxon>
        <taxon>Eleutherozoa</taxon>
        <taxon>Echinozoa</taxon>
        <taxon>Echinoidea</taxon>
        <taxon>Euechinoidea</taxon>
        <taxon>Echinacea</taxon>
        <taxon>Camarodonta</taxon>
        <taxon>Echinidea</taxon>
        <taxon>Echinidae</taxon>
        <taxon>Paracentrotus</taxon>
    </lineage>
</organism>
<proteinExistence type="evidence at transcript level"/>
<comment type="function">
    <text>Core component of nucleosome. Nucleosomes wrap and compact DNA into chromatin, limiting DNA accessibility to the cellular machineries which require DNA as a template. Histones thereby play a central role in transcription regulation, DNA repair, DNA replication and chromosomal stability. DNA accessibility is regulated via a complex set of post-translational modifications of histones, also called histone code, and nucleosome remodeling.</text>
</comment>
<comment type="subunit">
    <text>The nucleosome is a histone octamer containing two molecules each of H2A, H2B, H3 and H4 assembled in one H3-H4 heterotetramer and two H2A-H2B heterodimers. The octamer wraps approximately 147 bp of DNA.</text>
</comment>
<comment type="subcellular location">
    <subcellularLocation>
        <location evidence="1">Nucleus</location>
    </subcellularLocation>
    <subcellularLocation>
        <location evidence="1">Chromosome</location>
    </subcellularLocation>
</comment>
<comment type="developmental stage">
    <text>This histone is expressed during late embryonic development.</text>
</comment>
<comment type="PTM">
    <text evidence="1">Acetylation is generally linked to gene activation.</text>
</comment>
<comment type="PTM">
    <text evidence="1">Methylation at Lys-5 is linked to gene activation. Methylation at Lys-10 is linked to gene repression (By similarity).</text>
</comment>
<comment type="similarity">
    <text evidence="3">Belongs to the histone H3 family.</text>
</comment>
<sequence>MARTKQTARKSTGGKAPRKQLATKAARKSAPATGGVKKPHRYRPGTVALREIRRYQKSTELLIRKLPFQRLVREIAQDFKTELRFQSSAVMALQEASEAYLVGLFEDTNLCAIHAKRVTIMPKDIQLARRIRGERA</sequence>
<evidence type="ECO:0000250" key="1"/>
<evidence type="ECO:0000256" key="2">
    <source>
        <dbReference type="SAM" id="MobiDB-lite"/>
    </source>
</evidence>
<evidence type="ECO:0000305" key="3"/>
<keyword id="KW-0007">Acetylation</keyword>
<keyword id="KW-0158">Chromosome</keyword>
<keyword id="KW-0238">DNA-binding</keyword>
<keyword id="KW-0488">Methylation</keyword>
<keyword id="KW-0544">Nucleosome core</keyword>
<keyword id="KW-0539">Nucleus</keyword>
<keyword id="KW-0597">Phosphoprotein</keyword>